<gene>
    <name evidence="1" type="primary">ilvD</name>
    <name type="ordered locus">SSON_3942</name>
</gene>
<accession>Q3YVJ3</accession>
<proteinExistence type="inferred from homology"/>
<name>ILVD_SHISS</name>
<dbReference type="EC" id="4.2.1.9" evidence="1"/>
<dbReference type="EMBL" id="CP000038">
    <property type="protein sequence ID" value="AAZ90469.1"/>
    <property type="molecule type" value="Genomic_DNA"/>
</dbReference>
<dbReference type="RefSeq" id="WP_001127421.1">
    <property type="nucleotide sequence ID" value="NC_007384.1"/>
</dbReference>
<dbReference type="SMR" id="Q3YVJ3"/>
<dbReference type="GeneID" id="93778174"/>
<dbReference type="KEGG" id="ssn:SSON_3942"/>
<dbReference type="HOGENOM" id="CLU_014271_4_2_6"/>
<dbReference type="UniPathway" id="UPA00047">
    <property type="reaction ID" value="UER00057"/>
</dbReference>
<dbReference type="UniPathway" id="UPA00049">
    <property type="reaction ID" value="UER00061"/>
</dbReference>
<dbReference type="Proteomes" id="UP000002529">
    <property type="component" value="Chromosome"/>
</dbReference>
<dbReference type="GO" id="GO:0005829">
    <property type="term" value="C:cytosol"/>
    <property type="evidence" value="ECO:0007669"/>
    <property type="project" value="TreeGrafter"/>
</dbReference>
<dbReference type="GO" id="GO:0051537">
    <property type="term" value="F:2 iron, 2 sulfur cluster binding"/>
    <property type="evidence" value="ECO:0007669"/>
    <property type="project" value="UniProtKB-UniRule"/>
</dbReference>
<dbReference type="GO" id="GO:0004160">
    <property type="term" value="F:dihydroxy-acid dehydratase activity"/>
    <property type="evidence" value="ECO:0007669"/>
    <property type="project" value="UniProtKB-UniRule"/>
</dbReference>
<dbReference type="GO" id="GO:0000287">
    <property type="term" value="F:magnesium ion binding"/>
    <property type="evidence" value="ECO:0007669"/>
    <property type="project" value="UniProtKB-UniRule"/>
</dbReference>
<dbReference type="GO" id="GO:0009097">
    <property type="term" value="P:isoleucine biosynthetic process"/>
    <property type="evidence" value="ECO:0007669"/>
    <property type="project" value="UniProtKB-UniRule"/>
</dbReference>
<dbReference type="GO" id="GO:0009099">
    <property type="term" value="P:L-valine biosynthetic process"/>
    <property type="evidence" value="ECO:0007669"/>
    <property type="project" value="UniProtKB-UniRule"/>
</dbReference>
<dbReference type="FunFam" id="3.50.30.80:FF:000001">
    <property type="entry name" value="Dihydroxy-acid dehydratase"/>
    <property type="match status" value="1"/>
</dbReference>
<dbReference type="Gene3D" id="3.50.30.80">
    <property type="entry name" value="IlvD/EDD C-terminal domain-like"/>
    <property type="match status" value="1"/>
</dbReference>
<dbReference type="HAMAP" id="MF_00012">
    <property type="entry name" value="IlvD"/>
    <property type="match status" value="1"/>
</dbReference>
<dbReference type="InterPro" id="IPR042096">
    <property type="entry name" value="Dihydro-acid_dehy_C"/>
</dbReference>
<dbReference type="InterPro" id="IPR004404">
    <property type="entry name" value="DihydroxyA_deHydtase"/>
</dbReference>
<dbReference type="InterPro" id="IPR020558">
    <property type="entry name" value="DiOHA_6PGluconate_deHydtase_CS"/>
</dbReference>
<dbReference type="InterPro" id="IPR056740">
    <property type="entry name" value="ILV_EDD_C"/>
</dbReference>
<dbReference type="InterPro" id="IPR000581">
    <property type="entry name" value="ILV_EDD_N"/>
</dbReference>
<dbReference type="InterPro" id="IPR037237">
    <property type="entry name" value="IlvD/EDD_N"/>
</dbReference>
<dbReference type="NCBIfam" id="TIGR00110">
    <property type="entry name" value="ilvD"/>
    <property type="match status" value="1"/>
</dbReference>
<dbReference type="NCBIfam" id="NF009103">
    <property type="entry name" value="PRK12448.1"/>
    <property type="match status" value="1"/>
</dbReference>
<dbReference type="PANTHER" id="PTHR43661">
    <property type="entry name" value="D-XYLONATE DEHYDRATASE"/>
    <property type="match status" value="1"/>
</dbReference>
<dbReference type="PANTHER" id="PTHR43661:SF3">
    <property type="entry name" value="D-XYLONATE DEHYDRATASE YAGF-RELATED"/>
    <property type="match status" value="1"/>
</dbReference>
<dbReference type="Pfam" id="PF24877">
    <property type="entry name" value="ILV_EDD_C"/>
    <property type="match status" value="1"/>
</dbReference>
<dbReference type="Pfam" id="PF00920">
    <property type="entry name" value="ILVD_EDD_N"/>
    <property type="match status" value="1"/>
</dbReference>
<dbReference type="SUPFAM" id="SSF143975">
    <property type="entry name" value="IlvD/EDD N-terminal domain-like"/>
    <property type="match status" value="1"/>
</dbReference>
<dbReference type="SUPFAM" id="SSF52016">
    <property type="entry name" value="LeuD/IlvD-like"/>
    <property type="match status" value="1"/>
</dbReference>
<dbReference type="PROSITE" id="PS00886">
    <property type="entry name" value="ILVD_EDD_1"/>
    <property type="match status" value="1"/>
</dbReference>
<dbReference type="PROSITE" id="PS00887">
    <property type="entry name" value="ILVD_EDD_2"/>
    <property type="match status" value="1"/>
</dbReference>
<keyword id="KW-0001">2Fe-2S</keyword>
<keyword id="KW-0028">Amino-acid biosynthesis</keyword>
<keyword id="KW-0100">Branched-chain amino acid biosynthesis</keyword>
<keyword id="KW-0408">Iron</keyword>
<keyword id="KW-0411">Iron-sulfur</keyword>
<keyword id="KW-0456">Lyase</keyword>
<keyword id="KW-0460">Magnesium</keyword>
<keyword id="KW-0479">Metal-binding</keyword>
<keyword id="KW-1185">Reference proteome</keyword>
<evidence type="ECO:0000255" key="1">
    <source>
        <dbReference type="HAMAP-Rule" id="MF_00012"/>
    </source>
</evidence>
<comment type="function">
    <text evidence="1">Functions in the biosynthesis of branched-chain amino acids. Catalyzes the dehydration of (2R,3R)-2,3-dihydroxy-3-methylpentanoate (2,3-dihydroxy-3-methylvalerate) into 2-oxo-3-methylpentanoate (2-oxo-3-methylvalerate) and of (2R)-2,3-dihydroxy-3-methylbutanoate (2,3-dihydroxyisovalerate) into 2-oxo-3-methylbutanoate (2-oxoisovalerate), the penultimate precursor to L-isoleucine and L-valine, respectively.</text>
</comment>
<comment type="catalytic activity">
    <reaction evidence="1">
        <text>(2R)-2,3-dihydroxy-3-methylbutanoate = 3-methyl-2-oxobutanoate + H2O</text>
        <dbReference type="Rhea" id="RHEA:24809"/>
        <dbReference type="ChEBI" id="CHEBI:11851"/>
        <dbReference type="ChEBI" id="CHEBI:15377"/>
        <dbReference type="ChEBI" id="CHEBI:49072"/>
        <dbReference type="EC" id="4.2.1.9"/>
    </reaction>
    <physiologicalReaction direction="left-to-right" evidence="1">
        <dbReference type="Rhea" id="RHEA:24810"/>
    </physiologicalReaction>
</comment>
<comment type="catalytic activity">
    <reaction evidence="1">
        <text>(2R,3R)-2,3-dihydroxy-3-methylpentanoate = (S)-3-methyl-2-oxopentanoate + H2O</text>
        <dbReference type="Rhea" id="RHEA:27694"/>
        <dbReference type="ChEBI" id="CHEBI:15377"/>
        <dbReference type="ChEBI" id="CHEBI:35146"/>
        <dbReference type="ChEBI" id="CHEBI:49258"/>
        <dbReference type="EC" id="4.2.1.9"/>
    </reaction>
    <physiologicalReaction direction="left-to-right" evidence="1">
        <dbReference type="Rhea" id="RHEA:27695"/>
    </physiologicalReaction>
</comment>
<comment type="cofactor">
    <cofactor evidence="1">
        <name>[2Fe-2S] cluster</name>
        <dbReference type="ChEBI" id="CHEBI:190135"/>
    </cofactor>
    <text evidence="1">Binds 1 [2Fe-2S] cluster per subunit. This cluster acts as a Lewis acid cofactor.</text>
</comment>
<comment type="cofactor">
    <cofactor evidence="1">
        <name>Mg(2+)</name>
        <dbReference type="ChEBI" id="CHEBI:18420"/>
    </cofactor>
</comment>
<comment type="pathway">
    <text evidence="1">Amino-acid biosynthesis; L-isoleucine biosynthesis; L-isoleucine from 2-oxobutanoate: step 3/4.</text>
</comment>
<comment type="pathway">
    <text evidence="1">Amino-acid biosynthesis; L-valine biosynthesis; L-valine from pyruvate: step 3/4.</text>
</comment>
<comment type="subunit">
    <text evidence="1">Homodimer.</text>
</comment>
<comment type="similarity">
    <text evidence="1">Belongs to the IlvD/Edd family.</text>
</comment>
<reference key="1">
    <citation type="journal article" date="2005" name="Nucleic Acids Res.">
        <title>Genome dynamics and diversity of Shigella species, the etiologic agents of bacillary dysentery.</title>
        <authorList>
            <person name="Yang F."/>
            <person name="Yang J."/>
            <person name="Zhang X."/>
            <person name="Chen L."/>
            <person name="Jiang Y."/>
            <person name="Yan Y."/>
            <person name="Tang X."/>
            <person name="Wang J."/>
            <person name="Xiong Z."/>
            <person name="Dong J."/>
            <person name="Xue Y."/>
            <person name="Zhu Y."/>
            <person name="Xu X."/>
            <person name="Sun L."/>
            <person name="Chen S."/>
            <person name="Nie H."/>
            <person name="Peng J."/>
            <person name="Xu J."/>
            <person name="Wang Y."/>
            <person name="Yuan Z."/>
            <person name="Wen Y."/>
            <person name="Yao Z."/>
            <person name="Shen Y."/>
            <person name="Qiang B."/>
            <person name="Hou Y."/>
            <person name="Yu J."/>
            <person name="Jin Q."/>
        </authorList>
    </citation>
    <scope>NUCLEOTIDE SEQUENCE [LARGE SCALE GENOMIC DNA]</scope>
    <source>
        <strain>Ss046</strain>
    </source>
</reference>
<protein>
    <recommendedName>
        <fullName evidence="1">Dihydroxy-acid dehydratase</fullName>
        <shortName evidence="1">DAD</shortName>
        <ecNumber evidence="1">4.2.1.9</ecNumber>
    </recommendedName>
</protein>
<organism>
    <name type="scientific">Shigella sonnei (strain Ss046)</name>
    <dbReference type="NCBI Taxonomy" id="300269"/>
    <lineage>
        <taxon>Bacteria</taxon>
        <taxon>Pseudomonadati</taxon>
        <taxon>Pseudomonadota</taxon>
        <taxon>Gammaproteobacteria</taxon>
        <taxon>Enterobacterales</taxon>
        <taxon>Enterobacteriaceae</taxon>
        <taxon>Shigella</taxon>
    </lineage>
</organism>
<sequence>MPKYRSATTTHGRNMAGARALWRATGMTDADFGKPIIAVVNSFTQFVPGHVHLRDLGKLVAEQIEAAGGVAKEFNTIAVDDGIAMGHGGMLYSLPSRELIADSVEYMVNAHCADAMVCISNCDKITPGMLMASLRLNIPVIFVSGGPMEAGKTKLSEQIIKLDLVDAMIQGADPKVSDSQSDQVERSACPTCGSCSGMFTANSMNCLTEALGLSQPGNGSLLATHADRKQLFLNAGKRIVELTKRYYEQNDESALPRNIASKAAFENAMTLDIAMGGSTNTVLHLLAAAQEAEIDFTMSDIDKLSRKVPQLCKVAPSTQKYHMEDVHRAGGVIGILGELDRAGLLNRDVKNVLGLTLPQTLEQYDVMLTQDDAVKNMFRAGPAGIRTTQAFSQDCRWDSLDDDRANGCIRSLEHAYSKDGGLAVLYGNFAENGCIVKTAGVDDSILKFTGPAKVYESQDDAVEAILGGKVVAGDVVVIRYEGPKGGPGMQEMLYPTSFLKSMGLGKACALITDGRFSGGTSGLSIGHVSPEAASGGSIGLIEDGDLIAIDIPNRGIQLQVSDAELAARREAQEARGDKAWTPKNRERQVSFALRAYASLATSADKGAVRDKSKLGG</sequence>
<feature type="chain" id="PRO_0000225423" description="Dihydroxy-acid dehydratase">
    <location>
        <begin position="1"/>
        <end position="616"/>
    </location>
</feature>
<feature type="active site" description="Proton acceptor" evidence="1">
    <location>
        <position position="517"/>
    </location>
</feature>
<feature type="binding site" evidence="1">
    <location>
        <position position="81"/>
    </location>
    <ligand>
        <name>Mg(2+)</name>
        <dbReference type="ChEBI" id="CHEBI:18420"/>
    </ligand>
</feature>
<feature type="binding site" evidence="1">
    <location>
        <position position="122"/>
    </location>
    <ligand>
        <name>[2Fe-2S] cluster</name>
        <dbReference type="ChEBI" id="CHEBI:190135"/>
    </ligand>
</feature>
<feature type="binding site" evidence="1">
    <location>
        <position position="123"/>
    </location>
    <ligand>
        <name>Mg(2+)</name>
        <dbReference type="ChEBI" id="CHEBI:18420"/>
    </ligand>
</feature>
<feature type="binding site" description="via carbamate group" evidence="1">
    <location>
        <position position="124"/>
    </location>
    <ligand>
        <name>Mg(2+)</name>
        <dbReference type="ChEBI" id="CHEBI:18420"/>
    </ligand>
</feature>
<feature type="binding site" evidence="1">
    <location>
        <position position="195"/>
    </location>
    <ligand>
        <name>[2Fe-2S] cluster</name>
        <dbReference type="ChEBI" id="CHEBI:190135"/>
    </ligand>
</feature>
<feature type="binding site" evidence="1">
    <location>
        <position position="491"/>
    </location>
    <ligand>
        <name>Mg(2+)</name>
        <dbReference type="ChEBI" id="CHEBI:18420"/>
    </ligand>
</feature>
<feature type="modified residue" description="N6-carboxylysine" evidence="1">
    <location>
        <position position="124"/>
    </location>
</feature>